<sequence length="393" mass="42531">MASVDELQKKIKELEAKLAAVEAKGGPMRQKIEVMSSEVVDSNPYSRLMALKRMGIVNNYEQIREKTVAVVGVGGVGSVTAEMLTRCGIGKLILFDYDKVELANMNRLFFQPHQAGLSKVDAAAATLQNINPDVTIDAYNYNITTVDNFQKFCDTISKGSLTGGAVDLVLSCVDNFEARMAINTACNELDQKWFESGVSENAVSGHIQFISPGESACFACAPPLVVATKVDERTLKREGVCAASLPTTMGIVAGFLVQNSLKYLLEFGNVTHYLGYSALTDFFPTMSLQPNPTCDDASCRARQEQRRLQPRVELAAEVTEDCGPVHQDNDWGISVLEENSPADEDCPGLKLVDGVQVAYSIPVDSSTPESSTGGAVAASELSLEDLMQQMKTM</sequence>
<organism>
    <name type="scientific">Bombyx mori</name>
    <name type="common">Silk moth</name>
    <dbReference type="NCBI Taxonomy" id="7091"/>
    <lineage>
        <taxon>Eukaryota</taxon>
        <taxon>Metazoa</taxon>
        <taxon>Ecdysozoa</taxon>
        <taxon>Arthropoda</taxon>
        <taxon>Hexapoda</taxon>
        <taxon>Insecta</taxon>
        <taxon>Pterygota</taxon>
        <taxon>Neoptera</taxon>
        <taxon>Endopterygota</taxon>
        <taxon>Lepidoptera</taxon>
        <taxon>Glossata</taxon>
        <taxon>Ditrysia</taxon>
        <taxon>Bombycoidea</taxon>
        <taxon>Bombycidae</taxon>
        <taxon>Bombycinae</taxon>
        <taxon>Bombyx</taxon>
    </lineage>
</organism>
<keyword id="KW-0067">ATP-binding</keyword>
<keyword id="KW-0479">Metal-binding</keyword>
<keyword id="KW-0547">Nucleotide-binding</keyword>
<keyword id="KW-1185">Reference proteome</keyword>
<keyword id="KW-0833">Ubl conjugation pathway</keyword>
<keyword id="KW-0862">Zinc</keyword>
<proteinExistence type="evidence at transcript level"/>
<dbReference type="EMBL" id="FJ556993">
    <property type="protein sequence ID" value="ACL99855.1"/>
    <property type="molecule type" value="mRNA"/>
</dbReference>
<dbReference type="RefSeq" id="NP_001138805.1">
    <property type="nucleotide sequence ID" value="NM_001145333.1"/>
</dbReference>
<dbReference type="SMR" id="B9VJ80"/>
<dbReference type="FunCoup" id="B9VJ80">
    <property type="interactions" value="1994"/>
</dbReference>
<dbReference type="STRING" id="7091.B9VJ80"/>
<dbReference type="PaxDb" id="7091-BGIBMGA013537-TA"/>
<dbReference type="EnsemblMetazoa" id="NM_001145333.1">
    <property type="protein sequence ID" value="NP_001138805.1"/>
    <property type="gene ID" value="LOC100270786"/>
</dbReference>
<dbReference type="GeneID" id="100270786"/>
<dbReference type="KEGG" id="bmor:100270786"/>
<dbReference type="CTD" id="79876"/>
<dbReference type="eggNOG" id="KOG2336">
    <property type="taxonomic scope" value="Eukaryota"/>
</dbReference>
<dbReference type="HOGENOM" id="CLU_013325_0_0_1"/>
<dbReference type="InParanoid" id="B9VJ80"/>
<dbReference type="Proteomes" id="UP000005204">
    <property type="component" value="Unassembled WGS sequence"/>
</dbReference>
<dbReference type="GO" id="GO:0005829">
    <property type="term" value="C:cytosol"/>
    <property type="evidence" value="ECO:0007669"/>
    <property type="project" value="TreeGrafter"/>
</dbReference>
<dbReference type="GO" id="GO:0005524">
    <property type="term" value="F:ATP binding"/>
    <property type="evidence" value="ECO:0007669"/>
    <property type="project" value="UniProtKB-KW"/>
</dbReference>
<dbReference type="GO" id="GO:0046872">
    <property type="term" value="F:metal ion binding"/>
    <property type="evidence" value="ECO:0007669"/>
    <property type="project" value="UniProtKB-KW"/>
</dbReference>
<dbReference type="GO" id="GO:0071566">
    <property type="term" value="F:UFM1 activating enzyme activity"/>
    <property type="evidence" value="ECO:0007669"/>
    <property type="project" value="TreeGrafter"/>
</dbReference>
<dbReference type="GO" id="GO:0071569">
    <property type="term" value="P:protein ufmylation"/>
    <property type="evidence" value="ECO:0007669"/>
    <property type="project" value="TreeGrafter"/>
</dbReference>
<dbReference type="CDD" id="cd00757">
    <property type="entry name" value="ThiF_MoeB_HesA_family"/>
    <property type="match status" value="1"/>
</dbReference>
<dbReference type="FunFam" id="3.40.50.720:FF:000066">
    <property type="entry name" value="Putative ubiquitin-like modifier-activating enzyme 5"/>
    <property type="match status" value="1"/>
</dbReference>
<dbReference type="Gene3D" id="3.40.50.720">
    <property type="entry name" value="NAD(P)-binding Rossmann-like Domain"/>
    <property type="match status" value="1"/>
</dbReference>
<dbReference type="InterPro" id="IPR029752">
    <property type="entry name" value="D-isomer_DH_CS1"/>
</dbReference>
<dbReference type="InterPro" id="IPR045886">
    <property type="entry name" value="ThiF/MoeB/HesA"/>
</dbReference>
<dbReference type="InterPro" id="IPR000594">
    <property type="entry name" value="ThiF_NAD_FAD-bd"/>
</dbReference>
<dbReference type="InterPro" id="IPR035985">
    <property type="entry name" value="Ubiquitin-activating_enz"/>
</dbReference>
<dbReference type="PANTHER" id="PTHR10953">
    <property type="entry name" value="UBIQUITIN-ACTIVATING ENZYME E1"/>
    <property type="match status" value="1"/>
</dbReference>
<dbReference type="PANTHER" id="PTHR10953:SF9">
    <property type="entry name" value="UBIQUITIN-LIKE MODIFIER-ACTIVATING ENZYME 5"/>
    <property type="match status" value="1"/>
</dbReference>
<dbReference type="Pfam" id="PF00899">
    <property type="entry name" value="ThiF"/>
    <property type="match status" value="1"/>
</dbReference>
<dbReference type="SUPFAM" id="SSF69572">
    <property type="entry name" value="Activating enzymes of the ubiquitin-like proteins"/>
    <property type="match status" value="1"/>
</dbReference>
<name>UBA5_BOMMO</name>
<accession>B9VJ80</accession>
<comment type="function">
    <text evidence="1">E1-like enzyme which activates UFM1.</text>
</comment>
<comment type="similarity">
    <text evidence="2">Belongs to the ubiquitin-activating E1 family. UBA5 subfamily.</text>
</comment>
<evidence type="ECO:0000250" key="1"/>
<evidence type="ECO:0000305" key="2"/>
<protein>
    <recommendedName>
        <fullName>Ubiquitin-like modifier-activating enzyme 5</fullName>
        <shortName>Ubiquitin-activating enzyme 5</shortName>
    </recommendedName>
</protein>
<feature type="chain" id="PRO_0000391939" description="Ubiquitin-like modifier-activating enzyme 5">
    <location>
        <begin position="1"/>
        <end position="393"/>
    </location>
</feature>
<feature type="active site" description="Glycyl thioester intermediate" evidence="1">
    <location>
        <position position="241"/>
    </location>
</feature>
<feature type="binding site" evidence="1">
    <location>
        <position position="75"/>
    </location>
    <ligand>
        <name>ATP</name>
        <dbReference type="ChEBI" id="CHEBI:30616"/>
    </ligand>
</feature>
<feature type="binding site" evidence="1">
    <location>
        <position position="96"/>
    </location>
    <ligand>
        <name>ATP</name>
        <dbReference type="ChEBI" id="CHEBI:30616"/>
    </ligand>
</feature>
<feature type="binding site" evidence="1">
    <location>
        <position position="119"/>
    </location>
    <ligand>
        <name>ATP</name>
        <dbReference type="ChEBI" id="CHEBI:30616"/>
    </ligand>
</feature>
<feature type="binding site" evidence="1">
    <location>
        <position position="142"/>
    </location>
    <ligand>
        <name>ATP</name>
        <dbReference type="ChEBI" id="CHEBI:30616"/>
    </ligand>
</feature>
<feature type="binding site" evidence="1">
    <location>
        <position position="175"/>
    </location>
    <ligand>
        <name>ATP</name>
        <dbReference type="ChEBI" id="CHEBI:30616"/>
    </ligand>
</feature>
<feature type="binding site" evidence="1">
    <location>
        <position position="217"/>
    </location>
    <ligand>
        <name>Zn(2+)</name>
        <dbReference type="ChEBI" id="CHEBI:29105"/>
    </ligand>
</feature>
<feature type="binding site" evidence="1">
    <location>
        <position position="220"/>
    </location>
    <ligand>
        <name>Zn(2+)</name>
        <dbReference type="ChEBI" id="CHEBI:29105"/>
    </ligand>
</feature>
<feature type="binding site" evidence="1">
    <location>
        <position position="294"/>
    </location>
    <ligand>
        <name>Zn(2+)</name>
        <dbReference type="ChEBI" id="CHEBI:29105"/>
    </ligand>
</feature>
<feature type="binding site" evidence="1">
    <location>
        <position position="299"/>
    </location>
    <ligand>
        <name>Zn(2+)</name>
        <dbReference type="ChEBI" id="CHEBI:29105"/>
    </ligand>
</feature>
<reference key="1">
    <citation type="submission" date="2008-12" db="EMBL/GenBank/DDBJ databases">
        <authorList>
            <person name="Wu P."/>
            <person name="Guo X.-J."/>
            <person name="Li M.-W."/>
        </authorList>
    </citation>
    <scope>NUCLEOTIDE SEQUENCE [MRNA]</scope>
</reference>